<gene>
    <name evidence="1" type="primary">xseA</name>
    <name type="ordered locus">SA1354</name>
</gene>
<proteinExistence type="inferred from homology"/>
<organism>
    <name type="scientific">Staphylococcus aureus (strain N315)</name>
    <dbReference type="NCBI Taxonomy" id="158879"/>
    <lineage>
        <taxon>Bacteria</taxon>
        <taxon>Bacillati</taxon>
        <taxon>Bacillota</taxon>
        <taxon>Bacilli</taxon>
        <taxon>Bacillales</taxon>
        <taxon>Staphylococcaceae</taxon>
        <taxon>Staphylococcus</taxon>
    </lineage>
</organism>
<evidence type="ECO:0000255" key="1">
    <source>
        <dbReference type="HAMAP-Rule" id="MF_00378"/>
    </source>
</evidence>
<sequence>MSDYLSVSALTKYIKYKFDQDPHLQSVLIKGELSNFKKHSSGHLYFNVKDKESVISAMMFKGSASKLNFEPKEGDEVLLEARVSVFERRGNYQIYVNKMQLDGIGNLYQKLEALKKKLTEEGCFDKANKKSIPKFPKKIAVLTASTGAAIRDIHSTINSRFPLAEQIQISTLVQGEKAKDDIIEKIEYADSLGVDTIIVGRGGGSIEDLWNFNEEAVVRAIYNCKTPIISAVGHETDFTLSDFAADIRAATPTQAAVIATPDQYELLQQIQQYQFTLTRFIKKHLEQQRKHVEHLSSYYKFKQPTLLYDQQIQRRDDLEKRLKQQIQATFEQQRHRLMLLQQRYNLKALLSSVNQEQQNNLQLTNQLVKLLNSKILSYKNDLKNKVENLNNLSPTNTMLRGYAIVNKKDEVITSTKDLTENDQLTLTMKDGLVDAKVTKVRCNND</sequence>
<accession>P67450</accession>
<accession>Q99TX0</accession>
<protein>
    <recommendedName>
        <fullName evidence="1">Exodeoxyribonuclease 7 large subunit</fullName>
        <ecNumber evidence="1">3.1.11.6</ecNumber>
    </recommendedName>
    <alternativeName>
        <fullName evidence="1">Exodeoxyribonuclease VII large subunit</fullName>
        <shortName evidence="1">Exonuclease VII large subunit</shortName>
    </alternativeName>
</protein>
<reference key="1">
    <citation type="journal article" date="2001" name="Lancet">
        <title>Whole genome sequencing of meticillin-resistant Staphylococcus aureus.</title>
        <authorList>
            <person name="Kuroda M."/>
            <person name="Ohta T."/>
            <person name="Uchiyama I."/>
            <person name="Baba T."/>
            <person name="Yuzawa H."/>
            <person name="Kobayashi I."/>
            <person name="Cui L."/>
            <person name="Oguchi A."/>
            <person name="Aoki K."/>
            <person name="Nagai Y."/>
            <person name="Lian J.-Q."/>
            <person name="Ito T."/>
            <person name="Kanamori M."/>
            <person name="Matsumaru H."/>
            <person name="Maruyama A."/>
            <person name="Murakami H."/>
            <person name="Hosoyama A."/>
            <person name="Mizutani-Ui Y."/>
            <person name="Takahashi N.K."/>
            <person name="Sawano T."/>
            <person name="Inoue R."/>
            <person name="Kaito C."/>
            <person name="Sekimizu K."/>
            <person name="Hirakawa H."/>
            <person name="Kuhara S."/>
            <person name="Goto S."/>
            <person name="Yabuzaki J."/>
            <person name="Kanehisa M."/>
            <person name="Yamashita A."/>
            <person name="Oshima K."/>
            <person name="Furuya K."/>
            <person name="Yoshino C."/>
            <person name="Shiba T."/>
            <person name="Hattori M."/>
            <person name="Ogasawara N."/>
            <person name="Hayashi H."/>
            <person name="Hiramatsu K."/>
        </authorList>
    </citation>
    <scope>NUCLEOTIDE SEQUENCE [LARGE SCALE GENOMIC DNA]</scope>
    <source>
        <strain>N315</strain>
    </source>
</reference>
<keyword id="KW-0963">Cytoplasm</keyword>
<keyword id="KW-0269">Exonuclease</keyword>
<keyword id="KW-0378">Hydrolase</keyword>
<keyword id="KW-0540">Nuclease</keyword>
<comment type="function">
    <text evidence="1">Bidirectionally degrades single-stranded DNA into large acid-insoluble oligonucleotides, which are then degraded further into small acid-soluble oligonucleotides.</text>
</comment>
<comment type="catalytic activity">
    <reaction evidence="1">
        <text>Exonucleolytic cleavage in either 5'- to 3'- or 3'- to 5'-direction to yield nucleoside 5'-phosphates.</text>
        <dbReference type="EC" id="3.1.11.6"/>
    </reaction>
</comment>
<comment type="subunit">
    <text evidence="1">Heterooligomer composed of large and small subunits.</text>
</comment>
<comment type="subcellular location">
    <subcellularLocation>
        <location evidence="1">Cytoplasm</location>
    </subcellularLocation>
</comment>
<comment type="similarity">
    <text evidence="1">Belongs to the XseA family.</text>
</comment>
<name>EX7L_STAAN</name>
<dbReference type="EC" id="3.1.11.6" evidence="1"/>
<dbReference type="EMBL" id="BA000018">
    <property type="protein sequence ID" value="BAB42616.1"/>
    <property type="molecule type" value="Genomic_DNA"/>
</dbReference>
<dbReference type="PIR" id="C89932">
    <property type="entry name" value="C89932"/>
</dbReference>
<dbReference type="RefSeq" id="WP_001286928.1">
    <property type="nucleotide sequence ID" value="NC_002745.2"/>
</dbReference>
<dbReference type="SMR" id="P67450"/>
<dbReference type="EnsemblBacteria" id="BAB42616">
    <property type="protein sequence ID" value="BAB42616"/>
    <property type="gene ID" value="BAB42616"/>
</dbReference>
<dbReference type="KEGG" id="sau:SA1354"/>
<dbReference type="HOGENOM" id="CLU_023625_3_1_9"/>
<dbReference type="GO" id="GO:0005737">
    <property type="term" value="C:cytoplasm"/>
    <property type="evidence" value="ECO:0007669"/>
    <property type="project" value="UniProtKB-SubCell"/>
</dbReference>
<dbReference type="GO" id="GO:0009318">
    <property type="term" value="C:exodeoxyribonuclease VII complex"/>
    <property type="evidence" value="ECO:0007669"/>
    <property type="project" value="InterPro"/>
</dbReference>
<dbReference type="GO" id="GO:0008855">
    <property type="term" value="F:exodeoxyribonuclease VII activity"/>
    <property type="evidence" value="ECO:0007669"/>
    <property type="project" value="UniProtKB-UniRule"/>
</dbReference>
<dbReference type="GO" id="GO:0003676">
    <property type="term" value="F:nucleic acid binding"/>
    <property type="evidence" value="ECO:0007669"/>
    <property type="project" value="InterPro"/>
</dbReference>
<dbReference type="GO" id="GO:0006308">
    <property type="term" value="P:DNA catabolic process"/>
    <property type="evidence" value="ECO:0007669"/>
    <property type="project" value="UniProtKB-UniRule"/>
</dbReference>
<dbReference type="CDD" id="cd04489">
    <property type="entry name" value="ExoVII_LU_OBF"/>
    <property type="match status" value="1"/>
</dbReference>
<dbReference type="HAMAP" id="MF_00378">
    <property type="entry name" value="Exonuc_7_L"/>
    <property type="match status" value="1"/>
</dbReference>
<dbReference type="InterPro" id="IPR003753">
    <property type="entry name" value="Exonuc_VII_L"/>
</dbReference>
<dbReference type="InterPro" id="IPR020579">
    <property type="entry name" value="Exonuc_VII_lsu_C"/>
</dbReference>
<dbReference type="InterPro" id="IPR025824">
    <property type="entry name" value="OB-fold_nuc-bd_dom"/>
</dbReference>
<dbReference type="NCBIfam" id="TIGR00237">
    <property type="entry name" value="xseA"/>
    <property type="match status" value="1"/>
</dbReference>
<dbReference type="PANTHER" id="PTHR30008">
    <property type="entry name" value="EXODEOXYRIBONUCLEASE 7 LARGE SUBUNIT"/>
    <property type="match status" value="1"/>
</dbReference>
<dbReference type="PANTHER" id="PTHR30008:SF0">
    <property type="entry name" value="EXODEOXYRIBONUCLEASE 7 LARGE SUBUNIT"/>
    <property type="match status" value="1"/>
</dbReference>
<dbReference type="Pfam" id="PF02601">
    <property type="entry name" value="Exonuc_VII_L"/>
    <property type="match status" value="1"/>
</dbReference>
<dbReference type="Pfam" id="PF13742">
    <property type="entry name" value="tRNA_anti_2"/>
    <property type="match status" value="1"/>
</dbReference>
<feature type="chain" id="PRO_0000197879" description="Exodeoxyribonuclease 7 large subunit">
    <location>
        <begin position="1"/>
        <end position="445"/>
    </location>
</feature>